<keyword id="KW-0010">Activator</keyword>
<keyword id="KW-0025">Alternative splicing</keyword>
<keyword id="KW-0090">Biological rhythms</keyword>
<keyword id="KW-0963">Cytoplasm</keyword>
<keyword id="KW-0238">DNA-binding</keyword>
<keyword id="KW-0325">Glycoprotein</keyword>
<keyword id="KW-1017">Isopeptide bond</keyword>
<keyword id="KW-0479">Metal-binding</keyword>
<keyword id="KW-0539">Nucleus</keyword>
<keyword id="KW-0597">Phosphoprotein</keyword>
<keyword id="KW-0675">Receptor</keyword>
<keyword id="KW-1185">Reference proteome</keyword>
<keyword id="KW-0804">Transcription</keyword>
<keyword id="KW-0805">Transcription regulation</keyword>
<keyword id="KW-0832">Ubl conjugation</keyword>
<keyword id="KW-0862">Zinc</keyword>
<keyword id="KW-0863">Zinc-finger</keyword>
<proteinExistence type="evidence at transcript level"/>
<gene>
    <name type="primary">PPARG</name>
    <name type="synonym">NR1C3</name>
</gene>
<evidence type="ECO:0000250" key="1"/>
<evidence type="ECO:0000250" key="2">
    <source>
        <dbReference type="UniProtKB" id="P37231"/>
    </source>
</evidence>
<evidence type="ECO:0000250" key="3">
    <source>
        <dbReference type="UniProtKB" id="P37238"/>
    </source>
</evidence>
<evidence type="ECO:0000255" key="4">
    <source>
        <dbReference type="PROSITE-ProRule" id="PRU00407"/>
    </source>
</evidence>
<evidence type="ECO:0000255" key="5">
    <source>
        <dbReference type="PROSITE-ProRule" id="PRU01189"/>
    </source>
</evidence>
<evidence type="ECO:0000303" key="6">
    <source>
    </source>
</evidence>
<evidence type="ECO:0000305" key="7"/>
<protein>
    <recommendedName>
        <fullName>Peroxisome proliferator-activated receptor gamma</fullName>
        <shortName>PPAR-gamma</shortName>
    </recommendedName>
    <alternativeName>
        <fullName>Nuclear receptor subfamily 1 group C member 3</fullName>
    </alternativeName>
</protein>
<name>PPARG_MACMU</name>
<comment type="function">
    <text evidence="2 3">Nuclear receptor that binds peroxisome proliferators such as hypolipidemic drugs and fatty acids. Once activated by a ligand, the nuclear receptor binds to DNA specific PPAR response elements (PPRE) and modulates the transcription of its target genes, such as acyl-CoA oxidase. It therefore controls the peroxisomal beta-oxidation pathway of fatty acids. Key regulator of adipocyte differentiation and glucose homeostasis. ARF6 acts as a key regulator of the tissue-specific adipocyte P2 (aP2) enhancer. Acts as a critical regulator of gut homeostasis by suppressing NF-kappa-B-mediated pro-inflammatory responses. Plays a role in the regulation of cardiovascular circadian rhythms by regulating the transcription of BMAL1 in the blood vessels.</text>
</comment>
<comment type="activity regulation">
    <text evidence="1">PDPK1 activates its transcriptional activity independently of its kinase activity.</text>
</comment>
<comment type="subunit">
    <text evidence="2 3">Interacts with FOXO1 (acetylated form) (By similarity). Heterodimer with other nuclear receptors, such as RXRA. The heterodimer with the retinoic acid receptor RXRA is called adipocyte-specific transcription factor ARF6. Interacts with NCOA6 coactivator, leading to a strong increase in transcription of target genes. Interacts with coactivator PPARBP, leading to a mild increase in transcription of target genes. Interacts with NOCA7 in a ligand-inducible manner. Interacts with NCOA1 and NCOA2 LXXLL motifs. Interacts with ASXL1, ASXL2, DNTTIP2, FAM120B, MAP2K1/MEK1, NR0B2, PDPK1, PRDM16, PRMT2 and TGFB1I1. Interacts (when activated by agonist) with PPP5C. Interacts with HELZ2 and THRAP3; the interaction stimulates the transcriptional activity of PPARG. Interacts with PER2, the interaction is ligand dependent and blocks PPARG recruitment to target promoters. Interacts with NOCT. Interacts with ACTN4. Interacts (when in the liganded conformation) with GPS2 (By similarity). Interacts with CRY1 and CRY2 in a ligand-dependent manner (By similarity). In the absence of hormonal ligand, interacts with TACC1 (By similarity). In macrophages, interacts with PAQR3 and STUB1; the interactions promote PPARG poylubiquitination and STUB1-mediated degradation (By similarity).</text>
</comment>
<comment type="subcellular location">
    <subcellularLocation>
        <location evidence="4">Nucleus</location>
    </subcellularLocation>
    <subcellularLocation>
        <location evidence="1">Cytoplasm</location>
    </subcellularLocation>
    <text evidence="1">Redistributed from the nucleus to the cytosol through a MAP2K1/MEK1-dependent manner. NOCT enhances its nuclear translocation (By similarity).</text>
</comment>
<comment type="alternative products">
    <event type="alternative splicing"/>
    <isoform>
        <id>O18924-1</id>
        <name>2</name>
        <sequence type="displayed"/>
    </isoform>
    <isoform>
        <id>O18924-2</id>
        <name>1</name>
        <sequence type="described" ref="VSP_003646"/>
    </isoform>
    <text>Additional isoforms seem to exist.</text>
</comment>
<comment type="tissue specificity">
    <text>Highest expression in adipose tissue. Lower in liver, heart, kidney, stomach, duodenum and colon.</text>
</comment>
<comment type="domain">
    <text evidence="2">The 9aaTAD motif is a transactivation domain present in a large number of yeast and animal transcription factors.</text>
</comment>
<comment type="PTM">
    <text evidence="3">O-GlcNAcylation at Thr-84 reduces transcriptional activity in adipocytes.</text>
</comment>
<comment type="PTM">
    <text evidence="2">Phosphorylated at basal conditions and dephosphorylated when treated with the ligand. May be dephosphorylated by PPP5C. The phosphorylated form may be inactive and dephosphorylation induces adipogenic activity (By similarity).</text>
</comment>
<comment type="PTM">
    <text evidence="2 3">Ubiquitinated by E3 ubiquitin-protein ligase complex containing FBXO9; leading to proteasomal degradation (By similarity). Ubiquitinated at Lys-252 by TRIM55 leading to proteasomal degradation (By similarity). Ubiquitinated by E3 ubiquitin-protein ligase STUB1/CHIP; leading to proteasomal degradation (By similarity).</text>
</comment>
<comment type="similarity">
    <text evidence="7">Belongs to the nuclear hormone receptor family. NR1 subfamily.</text>
</comment>
<accession>O18924</accession>
<accession>Q9TQW6</accession>
<feature type="chain" id="PRO_0000053493" description="Peroxisome proliferator-activated receptor gamma">
    <location>
        <begin position="1"/>
        <end position="505"/>
    </location>
</feature>
<feature type="domain" description="NR LBD" evidence="5">
    <location>
        <begin position="238"/>
        <end position="503"/>
    </location>
</feature>
<feature type="DNA-binding region" description="Nuclear receptor" evidence="4">
    <location>
        <begin position="136"/>
        <end position="210"/>
    </location>
</feature>
<feature type="zinc finger region" description="NR C4-type" evidence="4">
    <location>
        <begin position="139"/>
        <end position="159"/>
    </location>
</feature>
<feature type="zinc finger region" description="NR C4-type" evidence="4">
    <location>
        <begin position="176"/>
        <end position="198"/>
    </location>
</feature>
<feature type="region of interest" description="Interaction with FAM120B" evidence="1">
    <location>
        <begin position="205"/>
        <end position="280"/>
    </location>
</feature>
<feature type="short sequence motif" description="9aaTAD" evidence="2">
    <location>
        <begin position="495"/>
        <end position="503"/>
    </location>
</feature>
<feature type="modified residue" description="Phosphoserine; by MAPK" evidence="3">
    <location>
        <position position="112"/>
    </location>
</feature>
<feature type="glycosylation site" description="O-linked (GlcNAc) threonine" evidence="1">
    <location>
        <position position="84"/>
    </location>
</feature>
<feature type="cross-link" description="Glycyl lysine isopeptide (Lys-Gly) (interchain with G-Cter in ubiquitin)" evidence="2">
    <location>
        <position position="252"/>
    </location>
</feature>
<feature type="splice variant" id="VSP_003646" description="In isoform 1." evidence="6">
    <location>
        <begin position="1"/>
        <end position="30"/>
    </location>
</feature>
<dbReference type="EMBL" id="AF033103">
    <property type="protein sequence ID" value="AAB87480.1"/>
    <property type="molecule type" value="mRNA"/>
</dbReference>
<dbReference type="EMBL" id="AF033343">
    <property type="protein sequence ID" value="AAB87482.1"/>
    <property type="molecule type" value="mRNA"/>
</dbReference>
<dbReference type="EMBL" id="AF033342">
    <property type="protein sequence ID" value="AAB87481.1"/>
    <property type="molecule type" value="mRNA"/>
</dbReference>
<dbReference type="RefSeq" id="NP_001028032.1">
    <molecule id="O18924-1"/>
    <property type="nucleotide sequence ID" value="NM_001032860.1"/>
</dbReference>
<dbReference type="RefSeq" id="XP_014985685.1">
    <molecule id="O18924-2"/>
    <property type="nucleotide sequence ID" value="XM_015130199.2"/>
</dbReference>
<dbReference type="RefSeq" id="XP_014985686.1">
    <molecule id="O18924-2"/>
    <property type="nucleotide sequence ID" value="XM_015130200.2"/>
</dbReference>
<dbReference type="RefSeq" id="XP_014985687.1">
    <property type="nucleotide sequence ID" value="XM_015130201.1"/>
</dbReference>
<dbReference type="RefSeq" id="XP_014985688.1">
    <molecule id="O18924-2"/>
    <property type="nucleotide sequence ID" value="XM_015130202.2"/>
</dbReference>
<dbReference type="BMRB" id="O18924"/>
<dbReference type="SMR" id="O18924"/>
<dbReference type="FunCoup" id="O18924">
    <property type="interactions" value="1921"/>
</dbReference>
<dbReference type="MINT" id="O18924"/>
<dbReference type="STRING" id="9544.ENSMMUP00000076208"/>
<dbReference type="GlyCosmos" id="O18924">
    <property type="glycosylation" value="1 site, No reported glycans"/>
</dbReference>
<dbReference type="PaxDb" id="9544-ENSMMUP00000009427"/>
<dbReference type="Ensembl" id="ENSMMUT00000010043.4">
    <molecule id="O18924-2"/>
    <property type="protein sequence ID" value="ENSMMUP00000009427.4"/>
    <property type="gene ID" value="ENSMMUG00000007191.4"/>
</dbReference>
<dbReference type="Ensembl" id="ENSMMUT00000068287.2">
    <molecule id="O18924-2"/>
    <property type="protein sequence ID" value="ENSMMUP00000057021.2"/>
    <property type="gene ID" value="ENSMMUG00000007191.4"/>
</dbReference>
<dbReference type="Ensembl" id="ENSMMUT00000071107.2">
    <molecule id="O18924-2"/>
    <property type="protein sequence ID" value="ENSMMUP00000041660.2"/>
    <property type="gene ID" value="ENSMMUG00000007191.4"/>
</dbReference>
<dbReference type="Ensembl" id="ENSMMUT00000100236.1">
    <molecule id="O18924-1"/>
    <property type="protein sequence ID" value="ENSMMUP00000076208.1"/>
    <property type="gene ID" value="ENSMMUG00000007191.4"/>
</dbReference>
<dbReference type="GeneID" id="574190"/>
<dbReference type="KEGG" id="mcc:574190"/>
<dbReference type="CTD" id="5468"/>
<dbReference type="VEuPathDB" id="HostDB:ENSMMUG00000007191"/>
<dbReference type="eggNOG" id="KOG3575">
    <property type="taxonomic scope" value="Eukaryota"/>
</dbReference>
<dbReference type="GeneTree" id="ENSGT00940000158273"/>
<dbReference type="HOGENOM" id="CLU_007368_4_2_1"/>
<dbReference type="InParanoid" id="O18924"/>
<dbReference type="OMA" id="EMPFWPL"/>
<dbReference type="OrthoDB" id="7634782at2759"/>
<dbReference type="Proteomes" id="UP000006718">
    <property type="component" value="Chromosome 2"/>
</dbReference>
<dbReference type="Bgee" id="ENSMMUG00000007191">
    <property type="expression patterns" value="Expressed in adipose tissue and 20 other cell types or tissues"/>
</dbReference>
<dbReference type="GO" id="GO:0005737">
    <property type="term" value="C:cytoplasm"/>
    <property type="evidence" value="ECO:0007669"/>
    <property type="project" value="UniProtKB-SubCell"/>
</dbReference>
<dbReference type="GO" id="GO:0005654">
    <property type="term" value="C:nucleoplasm"/>
    <property type="evidence" value="ECO:0007669"/>
    <property type="project" value="Ensembl"/>
</dbReference>
<dbReference type="GO" id="GO:0005634">
    <property type="term" value="C:nucleus"/>
    <property type="evidence" value="ECO:0000318"/>
    <property type="project" value="GO_Central"/>
</dbReference>
<dbReference type="GO" id="GO:0003682">
    <property type="term" value="F:chromatin binding"/>
    <property type="evidence" value="ECO:0000250"/>
    <property type="project" value="UniProtKB"/>
</dbReference>
<dbReference type="GO" id="GO:0003700">
    <property type="term" value="F:DNA-binding transcription factor activity"/>
    <property type="evidence" value="ECO:0000250"/>
    <property type="project" value="UniProtKB"/>
</dbReference>
<dbReference type="GO" id="GO:0001227">
    <property type="term" value="F:DNA-binding transcription repressor activity, RNA polymerase II-specific"/>
    <property type="evidence" value="ECO:0000318"/>
    <property type="project" value="GO_Central"/>
</dbReference>
<dbReference type="GO" id="GO:0070888">
    <property type="term" value="F:E-box binding"/>
    <property type="evidence" value="ECO:0000250"/>
    <property type="project" value="UniProtKB"/>
</dbReference>
<dbReference type="GO" id="GO:0004879">
    <property type="term" value="F:nuclear receptor activity"/>
    <property type="evidence" value="ECO:0000250"/>
    <property type="project" value="UniProtKB"/>
</dbReference>
<dbReference type="GO" id="GO:0000978">
    <property type="term" value="F:RNA polymerase II cis-regulatory region sequence-specific DNA binding"/>
    <property type="evidence" value="ECO:0000318"/>
    <property type="project" value="GO_Central"/>
</dbReference>
<dbReference type="GO" id="GO:0000976">
    <property type="term" value="F:transcription cis-regulatory region binding"/>
    <property type="evidence" value="ECO:0000250"/>
    <property type="project" value="UniProtKB"/>
</dbReference>
<dbReference type="GO" id="GO:0008270">
    <property type="term" value="F:zinc ion binding"/>
    <property type="evidence" value="ECO:0007669"/>
    <property type="project" value="UniProtKB-KW"/>
</dbReference>
<dbReference type="GO" id="GO:0030154">
    <property type="term" value="P:cell differentiation"/>
    <property type="evidence" value="ECO:0000318"/>
    <property type="project" value="GO_Central"/>
</dbReference>
<dbReference type="GO" id="GO:0032869">
    <property type="term" value="P:cellular response to insulin stimulus"/>
    <property type="evidence" value="ECO:0000250"/>
    <property type="project" value="UniProtKB"/>
</dbReference>
<dbReference type="GO" id="GO:0006631">
    <property type="term" value="P:fatty acid metabolic process"/>
    <property type="evidence" value="ECO:0000318"/>
    <property type="project" value="GO_Central"/>
</dbReference>
<dbReference type="GO" id="GO:0009755">
    <property type="term" value="P:hormone-mediated signaling pathway"/>
    <property type="evidence" value="ECO:0000318"/>
    <property type="project" value="GO_Central"/>
</dbReference>
<dbReference type="GO" id="GO:0030522">
    <property type="term" value="P:intracellular receptor signaling pathway"/>
    <property type="evidence" value="ECO:0000318"/>
    <property type="project" value="GO_Central"/>
</dbReference>
<dbReference type="GO" id="GO:0010887">
    <property type="term" value="P:negative regulation of cholesterol storage"/>
    <property type="evidence" value="ECO:0000318"/>
    <property type="project" value="GO_Central"/>
</dbReference>
<dbReference type="GO" id="GO:0050728">
    <property type="term" value="P:negative regulation of inflammatory response"/>
    <property type="evidence" value="ECO:0000318"/>
    <property type="project" value="GO_Central"/>
</dbReference>
<dbReference type="GO" id="GO:0000122">
    <property type="term" value="P:negative regulation of transcription by RNA polymerase II"/>
    <property type="evidence" value="ECO:0000318"/>
    <property type="project" value="GO_Central"/>
</dbReference>
<dbReference type="GO" id="GO:0035357">
    <property type="term" value="P:peroxisome proliferator activated receptor signaling pathway"/>
    <property type="evidence" value="ECO:0000250"/>
    <property type="project" value="UniProtKB"/>
</dbReference>
<dbReference type="GO" id="GO:0045893">
    <property type="term" value="P:positive regulation of DNA-templated transcription"/>
    <property type="evidence" value="ECO:0000250"/>
    <property type="project" value="UniProtKB"/>
</dbReference>
<dbReference type="GO" id="GO:0045923">
    <property type="term" value="P:positive regulation of fatty acid metabolic process"/>
    <property type="evidence" value="ECO:0000318"/>
    <property type="project" value="GO_Central"/>
</dbReference>
<dbReference type="GO" id="GO:0045944">
    <property type="term" value="P:positive regulation of transcription by RNA polymerase II"/>
    <property type="evidence" value="ECO:0000250"/>
    <property type="project" value="UniProtKB"/>
</dbReference>
<dbReference type="GO" id="GO:0042752">
    <property type="term" value="P:regulation of circadian rhythm"/>
    <property type="evidence" value="ECO:0000250"/>
    <property type="project" value="UniProtKB"/>
</dbReference>
<dbReference type="GO" id="GO:0006355">
    <property type="term" value="P:regulation of DNA-templated transcription"/>
    <property type="evidence" value="ECO:0000250"/>
    <property type="project" value="UniProtKB"/>
</dbReference>
<dbReference type="GO" id="GO:0006357">
    <property type="term" value="P:regulation of transcription by RNA polymerase II"/>
    <property type="evidence" value="ECO:0000250"/>
    <property type="project" value="UniProtKB"/>
</dbReference>
<dbReference type="GO" id="GO:0048384">
    <property type="term" value="P:retinoic acid receptor signaling pathway"/>
    <property type="evidence" value="ECO:0000250"/>
    <property type="project" value="UniProtKB"/>
</dbReference>
<dbReference type="GO" id="GO:0048511">
    <property type="term" value="P:rhythmic process"/>
    <property type="evidence" value="ECO:0007669"/>
    <property type="project" value="UniProtKB-KW"/>
</dbReference>
<dbReference type="CDD" id="cd06965">
    <property type="entry name" value="NR_DBD_Ppar"/>
    <property type="match status" value="1"/>
</dbReference>
<dbReference type="CDD" id="cd06932">
    <property type="entry name" value="NR_LBD_PPAR"/>
    <property type="match status" value="1"/>
</dbReference>
<dbReference type="FunFam" id="1.10.565.10:FF:000017">
    <property type="entry name" value="Peroxisome proliferator-activated receptor gamma"/>
    <property type="match status" value="1"/>
</dbReference>
<dbReference type="FunFam" id="3.30.50.10:FF:000010">
    <property type="entry name" value="Peroxisome proliferator-activated receptor gamma"/>
    <property type="match status" value="1"/>
</dbReference>
<dbReference type="Gene3D" id="3.30.50.10">
    <property type="entry name" value="Erythroid Transcription Factor GATA-1, subunit A"/>
    <property type="match status" value="1"/>
</dbReference>
<dbReference type="Gene3D" id="1.10.565.10">
    <property type="entry name" value="Retinoid X Receptor"/>
    <property type="match status" value="1"/>
</dbReference>
<dbReference type="InterPro" id="IPR003074">
    <property type="entry name" value="1Cnucl_rcpt"/>
</dbReference>
<dbReference type="InterPro" id="IPR035500">
    <property type="entry name" value="NHR-like_dom_sf"/>
</dbReference>
<dbReference type="InterPro" id="IPR000536">
    <property type="entry name" value="Nucl_hrmn_rcpt_lig-bd"/>
</dbReference>
<dbReference type="InterPro" id="IPR050234">
    <property type="entry name" value="Nuclear_hormone_rcpt_NR1"/>
</dbReference>
<dbReference type="InterPro" id="IPR001723">
    <property type="entry name" value="Nuclear_hrmn_rcpt"/>
</dbReference>
<dbReference type="InterPro" id="IPR003077">
    <property type="entry name" value="PPAR-gamma"/>
</dbReference>
<dbReference type="InterPro" id="IPR022590">
    <property type="entry name" value="PPARgamma_N"/>
</dbReference>
<dbReference type="InterPro" id="IPR001628">
    <property type="entry name" value="Znf_hrmn_rcpt"/>
</dbReference>
<dbReference type="InterPro" id="IPR013088">
    <property type="entry name" value="Znf_NHR/GATA"/>
</dbReference>
<dbReference type="PANTHER" id="PTHR24082">
    <property type="entry name" value="NUCLEAR HORMONE RECEPTOR"/>
    <property type="match status" value="1"/>
</dbReference>
<dbReference type="PANTHER" id="PTHR24082:SF488">
    <property type="entry name" value="PEROXISOME PROLIFERATOR-ACTIVATED RECEPTOR GAMMA"/>
    <property type="match status" value="1"/>
</dbReference>
<dbReference type="Pfam" id="PF00104">
    <property type="entry name" value="Hormone_recep"/>
    <property type="match status" value="1"/>
</dbReference>
<dbReference type="Pfam" id="PF12577">
    <property type="entry name" value="PPARgamma_N"/>
    <property type="match status" value="1"/>
</dbReference>
<dbReference type="Pfam" id="PF00105">
    <property type="entry name" value="zf-C4"/>
    <property type="match status" value="1"/>
</dbReference>
<dbReference type="PRINTS" id="PR01288">
    <property type="entry name" value="PROXISOMEPAR"/>
</dbReference>
<dbReference type="PRINTS" id="PR01291">
    <property type="entry name" value="PROXISOMPAGR"/>
</dbReference>
<dbReference type="PRINTS" id="PR00398">
    <property type="entry name" value="STRDHORMONER"/>
</dbReference>
<dbReference type="PRINTS" id="PR00047">
    <property type="entry name" value="STROIDFINGER"/>
</dbReference>
<dbReference type="SMART" id="SM00430">
    <property type="entry name" value="HOLI"/>
    <property type="match status" value="1"/>
</dbReference>
<dbReference type="SMART" id="SM00399">
    <property type="entry name" value="ZnF_C4"/>
    <property type="match status" value="1"/>
</dbReference>
<dbReference type="SUPFAM" id="SSF57716">
    <property type="entry name" value="Glucocorticoid receptor-like (DNA-binding domain)"/>
    <property type="match status" value="1"/>
</dbReference>
<dbReference type="SUPFAM" id="SSF48508">
    <property type="entry name" value="Nuclear receptor ligand-binding domain"/>
    <property type="match status" value="1"/>
</dbReference>
<dbReference type="PROSITE" id="PS51843">
    <property type="entry name" value="NR_LBD"/>
    <property type="match status" value="1"/>
</dbReference>
<dbReference type="PROSITE" id="PS00031">
    <property type="entry name" value="NUCLEAR_REC_DBD_1"/>
    <property type="match status" value="1"/>
</dbReference>
<dbReference type="PROSITE" id="PS51030">
    <property type="entry name" value="NUCLEAR_REC_DBD_2"/>
    <property type="match status" value="1"/>
</dbReference>
<reference key="1">
    <citation type="journal article" date="1998" name="Int. J. Obes. Relat. Metab. Disord.">
        <title>Relationships of PPARgamma and PPARgamma2 mRNA levels to obesity, diabetes and hyperinsulinaemia in rhesus monkeys.</title>
        <authorList>
            <person name="Hotta K."/>
            <person name="Gustafson T.A."/>
            <person name="Yoshioka S."/>
            <person name="Ortmeyer H.K."/>
            <person name="Bodkin N.L."/>
            <person name="Hansen B.C."/>
        </authorList>
    </citation>
    <scope>NUCLEOTIDE SEQUENCE [MRNA] (ISOFORMS 1 AND 2)</scope>
    <source>
        <tissue>Adipose tissue</tissue>
    </source>
</reference>
<organism>
    <name type="scientific">Macaca mulatta</name>
    <name type="common">Rhesus macaque</name>
    <dbReference type="NCBI Taxonomy" id="9544"/>
    <lineage>
        <taxon>Eukaryota</taxon>
        <taxon>Metazoa</taxon>
        <taxon>Chordata</taxon>
        <taxon>Craniata</taxon>
        <taxon>Vertebrata</taxon>
        <taxon>Euteleostomi</taxon>
        <taxon>Mammalia</taxon>
        <taxon>Eutheria</taxon>
        <taxon>Euarchontoglires</taxon>
        <taxon>Primates</taxon>
        <taxon>Haplorrhini</taxon>
        <taxon>Catarrhini</taxon>
        <taxon>Cercopithecidae</taxon>
        <taxon>Cercopithecinae</taxon>
        <taxon>Macaca</taxon>
    </lineage>
</organism>
<sequence>MGETLGDSPIDPESDSFTDTLSANISQEITMVDTEMPFWPTNFGISSVDLSVMDDHSHSFDIKPFTTVDFSSISAPHYEDIPFTRTDPMVADYKYDLKLQEYQSAIKVEPASPPYYSEKTQLYNKPHEEPSNSLMAIECRVCGDKASGFHYGVHACEGCKGFFRRTIRLKLIYDRCDLNCRIHKKSRNKCQYCRFQKCLAVGMSHNAIRFGRMPQAEKEKLLAEISSDIDQLNPESADLRALAKHLYDSYIKSFPLTKAKARAILTGKTTDKSPFVIYDMNSLMMGEDKIKFKHITPLQEQSKEVAIRIFQGCQFRSVEAVQEITEYAKSIPGFVNLDLNDQVTLLKYGVHEIIYTMLASLMNKDGVLISEGQGFMTREFLKSLRKPFGDFMEPKFEFAVKFNALELDDSDLAIFIAVIILSGDRPGLLNVKPIEDIQDNLLQALELQLKLNHPESSQLFAKLLQKMTDLRQIVTEHVQLLQVIKKTETDMSLHPLLQEIYKDLY</sequence>